<organism>
    <name type="scientific">Geobacter sp. (strain M21)</name>
    <dbReference type="NCBI Taxonomy" id="443144"/>
    <lineage>
        <taxon>Bacteria</taxon>
        <taxon>Pseudomonadati</taxon>
        <taxon>Thermodesulfobacteriota</taxon>
        <taxon>Desulfuromonadia</taxon>
        <taxon>Geobacterales</taxon>
        <taxon>Geobacteraceae</taxon>
        <taxon>Geobacter</taxon>
    </lineage>
</organism>
<sequence length="306" mass="33300">MTTDWAEIACEVPAEMVDTLADFLVELTGNGVGIDNLHLDTFSLDTLEDTPLKSVKGYLPLDDSLEEMRIRIEQFLAQTGPSFPGYVYAPPVVTVIRNEDWANNWKVHFKPVRIGRRLVIKPTWEEYLKQEGDLVIQIDPGMAFGTGAHPTTKMCLEALERIGFYAHGGKLPSPVLDVGTGSGVLSIAAALLGAEEIVAVDIDPEAVRVTVENLELNGMADRVAPSTTSLEQLPGGFQVVVANILAEELVRLAGELTARVAPGGWLILSGILTEKEAFVCAAFSSLELVENPKELEWSCLSFRKPL</sequence>
<gene>
    <name evidence="1" type="primary">prmA</name>
    <name type="ordered locus">GM21_0225</name>
</gene>
<feature type="chain" id="PRO_1000212751" description="Ribosomal protein L11 methyltransferase">
    <location>
        <begin position="1"/>
        <end position="306"/>
    </location>
</feature>
<feature type="binding site" evidence="1">
    <location>
        <position position="152"/>
    </location>
    <ligand>
        <name>S-adenosyl-L-methionine</name>
        <dbReference type="ChEBI" id="CHEBI:59789"/>
    </ligand>
</feature>
<feature type="binding site" evidence="1">
    <location>
        <position position="179"/>
    </location>
    <ligand>
        <name>S-adenosyl-L-methionine</name>
        <dbReference type="ChEBI" id="CHEBI:59789"/>
    </ligand>
</feature>
<feature type="binding site" evidence="1">
    <location>
        <position position="201"/>
    </location>
    <ligand>
        <name>S-adenosyl-L-methionine</name>
        <dbReference type="ChEBI" id="CHEBI:59789"/>
    </ligand>
</feature>
<feature type="binding site" evidence="1">
    <location>
        <position position="243"/>
    </location>
    <ligand>
        <name>S-adenosyl-L-methionine</name>
        <dbReference type="ChEBI" id="CHEBI:59789"/>
    </ligand>
</feature>
<keyword id="KW-0963">Cytoplasm</keyword>
<keyword id="KW-0489">Methyltransferase</keyword>
<keyword id="KW-0949">S-adenosyl-L-methionine</keyword>
<keyword id="KW-0808">Transferase</keyword>
<comment type="function">
    <text evidence="1">Methylates ribosomal protein L11.</text>
</comment>
<comment type="catalytic activity">
    <reaction evidence="1">
        <text>L-lysyl-[protein] + 3 S-adenosyl-L-methionine = N(6),N(6),N(6)-trimethyl-L-lysyl-[protein] + 3 S-adenosyl-L-homocysteine + 3 H(+)</text>
        <dbReference type="Rhea" id="RHEA:54192"/>
        <dbReference type="Rhea" id="RHEA-COMP:9752"/>
        <dbReference type="Rhea" id="RHEA-COMP:13826"/>
        <dbReference type="ChEBI" id="CHEBI:15378"/>
        <dbReference type="ChEBI" id="CHEBI:29969"/>
        <dbReference type="ChEBI" id="CHEBI:57856"/>
        <dbReference type="ChEBI" id="CHEBI:59789"/>
        <dbReference type="ChEBI" id="CHEBI:61961"/>
    </reaction>
</comment>
<comment type="subcellular location">
    <subcellularLocation>
        <location evidence="1">Cytoplasm</location>
    </subcellularLocation>
</comment>
<comment type="similarity">
    <text evidence="1">Belongs to the methyltransferase superfamily. PrmA family.</text>
</comment>
<protein>
    <recommendedName>
        <fullName evidence="1">Ribosomal protein L11 methyltransferase</fullName>
        <shortName evidence="1">L11 Mtase</shortName>
        <ecNumber evidence="1">2.1.1.-</ecNumber>
    </recommendedName>
</protein>
<evidence type="ECO:0000255" key="1">
    <source>
        <dbReference type="HAMAP-Rule" id="MF_00735"/>
    </source>
</evidence>
<accession>C6DY35</accession>
<reference key="1">
    <citation type="submission" date="2009-07" db="EMBL/GenBank/DDBJ databases">
        <title>Complete sequence of Geobacter sp. M21.</title>
        <authorList>
            <consortium name="US DOE Joint Genome Institute"/>
            <person name="Lucas S."/>
            <person name="Copeland A."/>
            <person name="Lapidus A."/>
            <person name="Glavina del Rio T."/>
            <person name="Dalin E."/>
            <person name="Tice H."/>
            <person name="Bruce D."/>
            <person name="Goodwin L."/>
            <person name="Pitluck S."/>
            <person name="Saunders E."/>
            <person name="Brettin T."/>
            <person name="Detter J.C."/>
            <person name="Han C."/>
            <person name="Larimer F."/>
            <person name="Land M."/>
            <person name="Hauser L."/>
            <person name="Kyrpides N."/>
            <person name="Ovchinnikova G."/>
            <person name="Lovley D."/>
        </authorList>
    </citation>
    <scope>NUCLEOTIDE SEQUENCE [LARGE SCALE GENOMIC DNA]</scope>
    <source>
        <strain>M21</strain>
    </source>
</reference>
<proteinExistence type="inferred from homology"/>
<name>PRMA_GEOSM</name>
<dbReference type="EC" id="2.1.1.-" evidence="1"/>
<dbReference type="EMBL" id="CP001661">
    <property type="protein sequence ID" value="ACT16310.1"/>
    <property type="molecule type" value="Genomic_DNA"/>
</dbReference>
<dbReference type="SMR" id="C6DY35"/>
<dbReference type="STRING" id="443144.GM21_0225"/>
<dbReference type="KEGG" id="gem:GM21_0225"/>
<dbReference type="eggNOG" id="COG2264">
    <property type="taxonomic scope" value="Bacteria"/>
</dbReference>
<dbReference type="HOGENOM" id="CLU_049382_0_1_7"/>
<dbReference type="OrthoDB" id="9785995at2"/>
<dbReference type="GO" id="GO:0005737">
    <property type="term" value="C:cytoplasm"/>
    <property type="evidence" value="ECO:0007669"/>
    <property type="project" value="UniProtKB-SubCell"/>
</dbReference>
<dbReference type="GO" id="GO:0016279">
    <property type="term" value="F:protein-lysine N-methyltransferase activity"/>
    <property type="evidence" value="ECO:0007669"/>
    <property type="project" value="RHEA"/>
</dbReference>
<dbReference type="GO" id="GO:0032259">
    <property type="term" value="P:methylation"/>
    <property type="evidence" value="ECO:0007669"/>
    <property type="project" value="UniProtKB-KW"/>
</dbReference>
<dbReference type="CDD" id="cd02440">
    <property type="entry name" value="AdoMet_MTases"/>
    <property type="match status" value="1"/>
</dbReference>
<dbReference type="Gene3D" id="3.40.50.150">
    <property type="entry name" value="Vaccinia Virus protein VP39"/>
    <property type="match status" value="1"/>
</dbReference>
<dbReference type="HAMAP" id="MF_00735">
    <property type="entry name" value="Methyltr_PrmA"/>
    <property type="match status" value="1"/>
</dbReference>
<dbReference type="InterPro" id="IPR050078">
    <property type="entry name" value="Ribosomal_L11_MeTrfase_PrmA"/>
</dbReference>
<dbReference type="InterPro" id="IPR004498">
    <property type="entry name" value="Ribosomal_PrmA_MeTrfase"/>
</dbReference>
<dbReference type="InterPro" id="IPR029063">
    <property type="entry name" value="SAM-dependent_MTases_sf"/>
</dbReference>
<dbReference type="NCBIfam" id="TIGR00406">
    <property type="entry name" value="prmA"/>
    <property type="match status" value="1"/>
</dbReference>
<dbReference type="PANTHER" id="PTHR43648">
    <property type="entry name" value="ELECTRON TRANSFER FLAVOPROTEIN BETA SUBUNIT LYSINE METHYLTRANSFERASE"/>
    <property type="match status" value="1"/>
</dbReference>
<dbReference type="PANTHER" id="PTHR43648:SF1">
    <property type="entry name" value="ELECTRON TRANSFER FLAVOPROTEIN BETA SUBUNIT LYSINE METHYLTRANSFERASE"/>
    <property type="match status" value="1"/>
</dbReference>
<dbReference type="Pfam" id="PF06325">
    <property type="entry name" value="PrmA"/>
    <property type="match status" value="1"/>
</dbReference>
<dbReference type="PIRSF" id="PIRSF000401">
    <property type="entry name" value="RPL11_MTase"/>
    <property type="match status" value="1"/>
</dbReference>
<dbReference type="SUPFAM" id="SSF53335">
    <property type="entry name" value="S-adenosyl-L-methionine-dependent methyltransferases"/>
    <property type="match status" value="1"/>
</dbReference>